<name>RL18_BUCBP</name>
<gene>
    <name evidence="1" type="primary">rplR</name>
    <name type="ordered locus">bbp_451</name>
</gene>
<proteinExistence type="inferred from homology"/>
<organism>
    <name type="scientific">Buchnera aphidicola subsp. Baizongia pistaciae (strain Bp)</name>
    <dbReference type="NCBI Taxonomy" id="224915"/>
    <lineage>
        <taxon>Bacteria</taxon>
        <taxon>Pseudomonadati</taxon>
        <taxon>Pseudomonadota</taxon>
        <taxon>Gammaproteobacteria</taxon>
        <taxon>Enterobacterales</taxon>
        <taxon>Erwiniaceae</taxon>
        <taxon>Buchnera</taxon>
    </lineage>
</organism>
<evidence type="ECO:0000255" key="1">
    <source>
        <dbReference type="HAMAP-Rule" id="MF_01337"/>
    </source>
</evidence>
<evidence type="ECO:0000305" key="2"/>
<comment type="function">
    <text evidence="1">This is one of the proteins that bind and probably mediate the attachment of the 5S RNA into the large ribosomal subunit, where it forms part of the central protuberance.</text>
</comment>
<comment type="subunit">
    <text evidence="1">Part of the 50S ribosomal subunit; part of the 5S rRNA/L5/L18/L25 subcomplex. Contacts the 5S and 23S rRNAs.</text>
</comment>
<comment type="similarity">
    <text evidence="1">Belongs to the universal ribosomal protein uL18 family.</text>
</comment>
<feature type="chain" id="PRO_0000131234" description="Large ribosomal subunit protein uL18">
    <location>
        <begin position="1"/>
        <end position="121"/>
    </location>
</feature>
<accession>Q89A81</accession>
<reference key="1">
    <citation type="journal article" date="2003" name="Proc. Natl. Acad. Sci. U.S.A.">
        <title>Reductive genome evolution in Buchnera aphidicola.</title>
        <authorList>
            <person name="van Ham R.C.H.J."/>
            <person name="Kamerbeek J."/>
            <person name="Palacios C."/>
            <person name="Rausell C."/>
            <person name="Abascal F."/>
            <person name="Bastolla U."/>
            <person name="Fernandez J.M."/>
            <person name="Jimenez L."/>
            <person name="Postigo M."/>
            <person name="Silva F.J."/>
            <person name="Tamames J."/>
            <person name="Viguera E."/>
            <person name="Latorre A."/>
            <person name="Valencia A."/>
            <person name="Moran F."/>
            <person name="Moya A."/>
        </authorList>
    </citation>
    <scope>NUCLEOTIDE SEQUENCE [LARGE SCALE GENOMIC DNA]</scope>
    <source>
        <strain>Bp</strain>
    </source>
</reference>
<keyword id="KW-1185">Reference proteome</keyword>
<keyword id="KW-0687">Ribonucleoprotein</keyword>
<keyword id="KW-0689">Ribosomal protein</keyword>
<keyword id="KW-0694">RNA-binding</keyword>
<keyword id="KW-0699">rRNA-binding</keyword>
<protein>
    <recommendedName>
        <fullName evidence="1">Large ribosomal subunit protein uL18</fullName>
    </recommendedName>
    <alternativeName>
        <fullName evidence="2">50S ribosomal protein L18</fullName>
    </alternativeName>
</protein>
<dbReference type="EMBL" id="AE016826">
    <property type="protein sequence ID" value="AAO27157.1"/>
    <property type="molecule type" value="Genomic_DNA"/>
</dbReference>
<dbReference type="SMR" id="Q89A81"/>
<dbReference type="STRING" id="224915.bbp_451"/>
<dbReference type="KEGG" id="bab:bbp_451"/>
<dbReference type="eggNOG" id="COG0256">
    <property type="taxonomic scope" value="Bacteria"/>
</dbReference>
<dbReference type="HOGENOM" id="CLU_098841_0_1_6"/>
<dbReference type="OrthoDB" id="9810939at2"/>
<dbReference type="Proteomes" id="UP000000601">
    <property type="component" value="Chromosome"/>
</dbReference>
<dbReference type="GO" id="GO:0022625">
    <property type="term" value="C:cytosolic large ribosomal subunit"/>
    <property type="evidence" value="ECO:0007669"/>
    <property type="project" value="TreeGrafter"/>
</dbReference>
<dbReference type="GO" id="GO:0008097">
    <property type="term" value="F:5S rRNA binding"/>
    <property type="evidence" value="ECO:0007669"/>
    <property type="project" value="TreeGrafter"/>
</dbReference>
<dbReference type="GO" id="GO:0003735">
    <property type="term" value="F:structural constituent of ribosome"/>
    <property type="evidence" value="ECO:0007669"/>
    <property type="project" value="InterPro"/>
</dbReference>
<dbReference type="GO" id="GO:0006412">
    <property type="term" value="P:translation"/>
    <property type="evidence" value="ECO:0007669"/>
    <property type="project" value="UniProtKB-UniRule"/>
</dbReference>
<dbReference type="CDD" id="cd00432">
    <property type="entry name" value="Ribosomal_L18_L5e"/>
    <property type="match status" value="1"/>
</dbReference>
<dbReference type="FunFam" id="3.30.420.100:FF:000001">
    <property type="entry name" value="50S ribosomal protein L18"/>
    <property type="match status" value="1"/>
</dbReference>
<dbReference type="Gene3D" id="3.30.420.100">
    <property type="match status" value="1"/>
</dbReference>
<dbReference type="HAMAP" id="MF_01337_B">
    <property type="entry name" value="Ribosomal_uL18_B"/>
    <property type="match status" value="1"/>
</dbReference>
<dbReference type="InterPro" id="IPR004389">
    <property type="entry name" value="Ribosomal_uL18_bac-type"/>
</dbReference>
<dbReference type="InterPro" id="IPR005484">
    <property type="entry name" value="Ribosomal_uL18_bac/euk"/>
</dbReference>
<dbReference type="NCBIfam" id="TIGR00060">
    <property type="entry name" value="L18_bact"/>
    <property type="match status" value="1"/>
</dbReference>
<dbReference type="PANTHER" id="PTHR12899">
    <property type="entry name" value="39S RIBOSOMAL PROTEIN L18, MITOCHONDRIAL"/>
    <property type="match status" value="1"/>
</dbReference>
<dbReference type="PANTHER" id="PTHR12899:SF3">
    <property type="entry name" value="LARGE RIBOSOMAL SUBUNIT PROTEIN UL18M"/>
    <property type="match status" value="1"/>
</dbReference>
<dbReference type="Pfam" id="PF00861">
    <property type="entry name" value="Ribosomal_L18p"/>
    <property type="match status" value="1"/>
</dbReference>
<dbReference type="SUPFAM" id="SSF53137">
    <property type="entry name" value="Translational machinery components"/>
    <property type="match status" value="1"/>
</dbReference>
<sequence length="121" mass="13668">MIISINKKKARLRRAARTRFQIKKLHLIRLVVHRTSKHIYAQIIDSKNALVLTSASTVEKEILNLVKYTGNIHASICIGKKIAERALMKGIINVSFDRSGFQYHGRVKALADAARESGLKF</sequence>